<evidence type="ECO:0000255" key="1">
    <source>
        <dbReference type="PROSITE-ProRule" id="PRU00080"/>
    </source>
</evidence>
<gene>
    <name type="ordered locus">At1g71320</name>
    <name type="ORF">F3I17.3</name>
</gene>
<reference key="1">
    <citation type="journal article" date="2000" name="Nature">
        <title>Sequence and analysis of chromosome 1 of the plant Arabidopsis thaliana.</title>
        <authorList>
            <person name="Theologis A."/>
            <person name="Ecker J.R."/>
            <person name="Palm C.J."/>
            <person name="Federspiel N.A."/>
            <person name="Kaul S."/>
            <person name="White O."/>
            <person name="Alonso J."/>
            <person name="Altafi H."/>
            <person name="Araujo R."/>
            <person name="Bowman C.L."/>
            <person name="Brooks S.Y."/>
            <person name="Buehler E."/>
            <person name="Chan A."/>
            <person name="Chao Q."/>
            <person name="Chen H."/>
            <person name="Cheuk R.F."/>
            <person name="Chin C.W."/>
            <person name="Chung M.K."/>
            <person name="Conn L."/>
            <person name="Conway A.B."/>
            <person name="Conway A.R."/>
            <person name="Creasy T.H."/>
            <person name="Dewar K."/>
            <person name="Dunn P."/>
            <person name="Etgu P."/>
            <person name="Feldblyum T.V."/>
            <person name="Feng J.-D."/>
            <person name="Fong B."/>
            <person name="Fujii C.Y."/>
            <person name="Gill J.E."/>
            <person name="Goldsmith A.D."/>
            <person name="Haas B."/>
            <person name="Hansen N.F."/>
            <person name="Hughes B."/>
            <person name="Huizar L."/>
            <person name="Hunter J.L."/>
            <person name="Jenkins J."/>
            <person name="Johnson-Hopson C."/>
            <person name="Khan S."/>
            <person name="Khaykin E."/>
            <person name="Kim C.J."/>
            <person name="Koo H.L."/>
            <person name="Kremenetskaia I."/>
            <person name="Kurtz D.B."/>
            <person name="Kwan A."/>
            <person name="Lam B."/>
            <person name="Langin-Hooper S."/>
            <person name="Lee A."/>
            <person name="Lee J.M."/>
            <person name="Lenz C.A."/>
            <person name="Li J.H."/>
            <person name="Li Y.-P."/>
            <person name="Lin X."/>
            <person name="Liu S.X."/>
            <person name="Liu Z.A."/>
            <person name="Luros J.S."/>
            <person name="Maiti R."/>
            <person name="Marziali A."/>
            <person name="Militscher J."/>
            <person name="Miranda M."/>
            <person name="Nguyen M."/>
            <person name="Nierman W.C."/>
            <person name="Osborne B.I."/>
            <person name="Pai G."/>
            <person name="Peterson J."/>
            <person name="Pham P.K."/>
            <person name="Rizzo M."/>
            <person name="Rooney T."/>
            <person name="Rowley D."/>
            <person name="Sakano H."/>
            <person name="Salzberg S.L."/>
            <person name="Schwartz J.R."/>
            <person name="Shinn P."/>
            <person name="Southwick A.M."/>
            <person name="Sun H."/>
            <person name="Tallon L.J."/>
            <person name="Tambunga G."/>
            <person name="Toriumi M.J."/>
            <person name="Town C.D."/>
            <person name="Utterback T."/>
            <person name="Van Aken S."/>
            <person name="Vaysberg M."/>
            <person name="Vysotskaia V.S."/>
            <person name="Walker M."/>
            <person name="Wu D."/>
            <person name="Yu G."/>
            <person name="Fraser C.M."/>
            <person name="Venter J.C."/>
            <person name="Davis R.W."/>
        </authorList>
    </citation>
    <scope>NUCLEOTIDE SEQUENCE [LARGE SCALE GENOMIC DNA]</scope>
    <source>
        <strain>cv. Columbia</strain>
    </source>
</reference>
<reference key="2">
    <citation type="journal article" date="2017" name="Plant J.">
        <title>Araport11: a complete reannotation of the Arabidopsis thaliana reference genome.</title>
        <authorList>
            <person name="Cheng C.Y."/>
            <person name="Krishnakumar V."/>
            <person name="Chan A.P."/>
            <person name="Thibaud-Nissen F."/>
            <person name="Schobel S."/>
            <person name="Town C.D."/>
        </authorList>
    </citation>
    <scope>GENOME REANNOTATION</scope>
    <source>
        <strain>cv. Columbia</strain>
    </source>
</reference>
<organism>
    <name type="scientific">Arabidopsis thaliana</name>
    <name type="common">Mouse-ear cress</name>
    <dbReference type="NCBI Taxonomy" id="3702"/>
    <lineage>
        <taxon>Eukaryota</taxon>
        <taxon>Viridiplantae</taxon>
        <taxon>Streptophyta</taxon>
        <taxon>Embryophyta</taxon>
        <taxon>Tracheophyta</taxon>
        <taxon>Spermatophyta</taxon>
        <taxon>Magnoliopsida</taxon>
        <taxon>eudicotyledons</taxon>
        <taxon>Gunneridae</taxon>
        <taxon>Pentapetalae</taxon>
        <taxon>rosids</taxon>
        <taxon>malvids</taxon>
        <taxon>Brassicales</taxon>
        <taxon>Brassicaceae</taxon>
        <taxon>Camelineae</taxon>
        <taxon>Arabidopsis</taxon>
    </lineage>
</organism>
<name>FB87_ARATH</name>
<protein>
    <recommendedName>
        <fullName>Putative F-box protein At1g71320</fullName>
    </recommendedName>
</protein>
<proteinExistence type="predicted"/>
<keyword id="KW-1185">Reference proteome</keyword>
<feature type="chain" id="PRO_0000283360" description="Putative F-box protein At1g71320">
    <location>
        <begin position="1"/>
        <end position="392"/>
    </location>
</feature>
<feature type="domain" description="F-box" evidence="1">
    <location>
        <begin position="8"/>
        <end position="55"/>
    </location>
</feature>
<sequence>MENDKHNNPKTIFIPDDIAEGIFHHLPIKSLARFKVLSKKWTSMIESTYFSHKRLIRTGLPTPNMKFLHISQHFTANFVEEYSNSITFLLETFSRDDQNNRKTFDESQNKTIQVLGSCDGLVLLRIHDDFRSIYLINPTTKEHMKLSPEFMQWPFTLSYLTPAMANKPWRQLSQSVLDYDISVKRMPSLAGFGKDIVKKSYKVVLIYTRYEIHDHEFKAKVLSLDNGEQRDVGFYDIHHCIFCDEQTSVYANGSLFWLTLKKLSQTSYQLLAIDLHTEEFRWILLPECDTKYATNIEMWNLNERLCLSDVLESSNLVVWSLHQEYPTEKWEKIYSIKIDVIRTNQLHEKFWMLGLAAAYFSNIRNRQDQVSFFRQRTISYLPTMISPSNLML</sequence>
<accession>Q9FVV8</accession>
<dbReference type="EMBL" id="AC016162">
    <property type="protein sequence ID" value="AAG51885.1"/>
    <property type="molecule type" value="Genomic_DNA"/>
</dbReference>
<dbReference type="EMBL" id="CP002684">
    <property type="protein sequence ID" value="AEE35189.1"/>
    <property type="molecule type" value="Genomic_DNA"/>
</dbReference>
<dbReference type="PIR" id="A96738">
    <property type="entry name" value="A96738"/>
</dbReference>
<dbReference type="RefSeq" id="NP_177288.1">
    <property type="nucleotide sequence ID" value="NM_105801.1"/>
</dbReference>
<dbReference type="SMR" id="Q9FVV8"/>
<dbReference type="iPTMnet" id="Q9FVV8"/>
<dbReference type="PaxDb" id="3702-AT1G71320.1"/>
<dbReference type="EnsemblPlants" id="AT1G71320.1">
    <property type="protein sequence ID" value="AT1G71320.1"/>
    <property type="gene ID" value="AT1G71320"/>
</dbReference>
<dbReference type="GeneID" id="843473"/>
<dbReference type="Gramene" id="AT1G71320.1">
    <property type="protein sequence ID" value="AT1G71320.1"/>
    <property type="gene ID" value="AT1G71320"/>
</dbReference>
<dbReference type="KEGG" id="ath:AT1G71320"/>
<dbReference type="Araport" id="AT1G71320"/>
<dbReference type="TAIR" id="AT1G71320"/>
<dbReference type="HOGENOM" id="CLU_678535_0_0_1"/>
<dbReference type="InParanoid" id="Q9FVV8"/>
<dbReference type="OMA" id="TEEFRWI"/>
<dbReference type="PhylomeDB" id="Q9FVV8"/>
<dbReference type="PRO" id="PR:Q9FVV8"/>
<dbReference type="Proteomes" id="UP000006548">
    <property type="component" value="Chromosome 1"/>
</dbReference>
<dbReference type="InterPro" id="IPR006527">
    <property type="entry name" value="F-box-assoc_dom_typ1"/>
</dbReference>
<dbReference type="InterPro" id="IPR017451">
    <property type="entry name" value="F-box-assoc_interact_dom"/>
</dbReference>
<dbReference type="InterPro" id="IPR036047">
    <property type="entry name" value="F-box-like_dom_sf"/>
</dbReference>
<dbReference type="InterPro" id="IPR001810">
    <property type="entry name" value="F-box_dom"/>
</dbReference>
<dbReference type="InterPro" id="IPR050796">
    <property type="entry name" value="SCF_F-box_component"/>
</dbReference>
<dbReference type="NCBIfam" id="TIGR01640">
    <property type="entry name" value="F_box_assoc_1"/>
    <property type="match status" value="1"/>
</dbReference>
<dbReference type="PANTHER" id="PTHR31672">
    <property type="entry name" value="BNACNNG10540D PROTEIN"/>
    <property type="match status" value="1"/>
</dbReference>
<dbReference type="PANTHER" id="PTHR31672:SF13">
    <property type="entry name" value="F-BOX PROTEIN CPR30-LIKE"/>
    <property type="match status" value="1"/>
</dbReference>
<dbReference type="Pfam" id="PF00646">
    <property type="entry name" value="F-box"/>
    <property type="match status" value="1"/>
</dbReference>
<dbReference type="Pfam" id="PF07734">
    <property type="entry name" value="FBA_1"/>
    <property type="match status" value="1"/>
</dbReference>
<dbReference type="SMART" id="SM00256">
    <property type="entry name" value="FBOX"/>
    <property type="match status" value="1"/>
</dbReference>
<dbReference type="SUPFAM" id="SSF81383">
    <property type="entry name" value="F-box domain"/>
    <property type="match status" value="1"/>
</dbReference>
<dbReference type="PROSITE" id="PS50181">
    <property type="entry name" value="FBOX"/>
    <property type="match status" value="1"/>
</dbReference>